<evidence type="ECO:0000255" key="1">
    <source>
        <dbReference type="HAMAP-Rule" id="MF_00198"/>
    </source>
</evidence>
<proteinExistence type="inferred from homology"/>
<name>SPEE2_LEPIN</name>
<organism>
    <name type="scientific">Leptospira interrogans serogroup Icterohaemorrhagiae serovar Lai (strain 56601)</name>
    <dbReference type="NCBI Taxonomy" id="189518"/>
    <lineage>
        <taxon>Bacteria</taxon>
        <taxon>Pseudomonadati</taxon>
        <taxon>Spirochaetota</taxon>
        <taxon>Spirochaetia</taxon>
        <taxon>Leptospirales</taxon>
        <taxon>Leptospiraceae</taxon>
        <taxon>Leptospira</taxon>
    </lineage>
</organism>
<dbReference type="EC" id="2.5.1.16" evidence="1"/>
<dbReference type="EMBL" id="AE010301">
    <property type="protein sequence ID" value="AAN51870.2"/>
    <property type="molecule type" value="Genomic_DNA"/>
</dbReference>
<dbReference type="RefSeq" id="NP_714855.2">
    <property type="nucleotide sequence ID" value="NC_004343.2"/>
</dbReference>
<dbReference type="SMR" id="Q8EXA3"/>
<dbReference type="FunCoup" id="Q8EXA3">
    <property type="interactions" value="381"/>
</dbReference>
<dbReference type="STRING" id="189518.LB_311"/>
<dbReference type="PaxDb" id="189518-LB_311"/>
<dbReference type="EnsemblBacteria" id="AAN51870">
    <property type="protein sequence ID" value="AAN51870"/>
    <property type="gene ID" value="LB_311"/>
</dbReference>
<dbReference type="KEGG" id="lil:LB_311"/>
<dbReference type="PATRIC" id="fig|189518.3.peg.4632"/>
<dbReference type="HOGENOM" id="CLU_048199_1_0_12"/>
<dbReference type="InParanoid" id="Q8EXA3"/>
<dbReference type="OrthoDB" id="9793120at2"/>
<dbReference type="UniPathway" id="UPA00248">
    <property type="reaction ID" value="UER00314"/>
</dbReference>
<dbReference type="Proteomes" id="UP000001408">
    <property type="component" value="Chromosome II"/>
</dbReference>
<dbReference type="GO" id="GO:0005829">
    <property type="term" value="C:cytosol"/>
    <property type="evidence" value="ECO:0000318"/>
    <property type="project" value="GO_Central"/>
</dbReference>
<dbReference type="GO" id="GO:0004766">
    <property type="term" value="F:spermidine synthase activity"/>
    <property type="evidence" value="ECO:0000318"/>
    <property type="project" value="GO_Central"/>
</dbReference>
<dbReference type="GO" id="GO:0008295">
    <property type="term" value="P:spermidine biosynthetic process"/>
    <property type="evidence" value="ECO:0000318"/>
    <property type="project" value="GO_Central"/>
</dbReference>
<dbReference type="CDD" id="cd02440">
    <property type="entry name" value="AdoMet_MTases"/>
    <property type="match status" value="1"/>
</dbReference>
<dbReference type="FunFam" id="3.40.50.150:FF:000190">
    <property type="entry name" value="Spermidine synthase"/>
    <property type="match status" value="1"/>
</dbReference>
<dbReference type="Gene3D" id="2.30.140.10">
    <property type="entry name" value="Spermidine synthase, tetramerisation domain"/>
    <property type="match status" value="1"/>
</dbReference>
<dbReference type="Gene3D" id="3.40.50.150">
    <property type="entry name" value="Vaccinia Virus protein VP39"/>
    <property type="match status" value="1"/>
</dbReference>
<dbReference type="HAMAP" id="MF_00198">
    <property type="entry name" value="Spermidine_synth"/>
    <property type="match status" value="1"/>
</dbReference>
<dbReference type="InterPro" id="IPR030374">
    <property type="entry name" value="PABS"/>
</dbReference>
<dbReference type="InterPro" id="IPR030373">
    <property type="entry name" value="PABS_CS"/>
</dbReference>
<dbReference type="InterPro" id="IPR029063">
    <property type="entry name" value="SAM-dependent_MTases_sf"/>
</dbReference>
<dbReference type="InterPro" id="IPR001045">
    <property type="entry name" value="Spermi_synthase"/>
</dbReference>
<dbReference type="InterPro" id="IPR035246">
    <property type="entry name" value="Spermidine_synt_N"/>
</dbReference>
<dbReference type="InterPro" id="IPR037163">
    <property type="entry name" value="Spermidine_synt_N_sf"/>
</dbReference>
<dbReference type="NCBIfam" id="NF002010">
    <property type="entry name" value="PRK00811.1"/>
    <property type="match status" value="1"/>
</dbReference>
<dbReference type="NCBIfam" id="TIGR00417">
    <property type="entry name" value="speE"/>
    <property type="match status" value="1"/>
</dbReference>
<dbReference type="PANTHER" id="PTHR11558:SF11">
    <property type="entry name" value="SPERMIDINE SYNTHASE"/>
    <property type="match status" value="1"/>
</dbReference>
<dbReference type="PANTHER" id="PTHR11558">
    <property type="entry name" value="SPERMIDINE/SPERMINE SYNTHASE"/>
    <property type="match status" value="1"/>
</dbReference>
<dbReference type="Pfam" id="PF17284">
    <property type="entry name" value="Spermine_synt_N"/>
    <property type="match status" value="1"/>
</dbReference>
<dbReference type="Pfam" id="PF01564">
    <property type="entry name" value="Spermine_synth"/>
    <property type="match status" value="1"/>
</dbReference>
<dbReference type="SUPFAM" id="SSF53335">
    <property type="entry name" value="S-adenosyl-L-methionine-dependent methyltransferases"/>
    <property type="match status" value="1"/>
</dbReference>
<dbReference type="PROSITE" id="PS01330">
    <property type="entry name" value="PABS_1"/>
    <property type="match status" value="1"/>
</dbReference>
<dbReference type="PROSITE" id="PS51006">
    <property type="entry name" value="PABS_2"/>
    <property type="match status" value="1"/>
</dbReference>
<protein>
    <recommendedName>
        <fullName evidence="1">Polyamine aminopropyltransferase 2</fullName>
    </recommendedName>
    <alternativeName>
        <fullName evidence="1">Putrescine aminopropyltransferase 2</fullName>
        <shortName evidence="1">PAPT 2</shortName>
    </alternativeName>
    <alternativeName>
        <fullName evidence="1">Spermidine synthase 2</fullName>
        <shortName evidence="1">SPDS 2</shortName>
        <shortName evidence="1">SPDSY 2</shortName>
        <ecNumber evidence="1">2.5.1.16</ecNumber>
    </alternativeName>
</protein>
<keyword id="KW-0963">Cytoplasm</keyword>
<keyword id="KW-0620">Polyamine biosynthesis</keyword>
<keyword id="KW-1185">Reference proteome</keyword>
<keyword id="KW-0745">Spermidine biosynthesis</keyword>
<keyword id="KW-0808">Transferase</keyword>
<feature type="chain" id="PRO_0000156486" description="Polyamine aminopropyltransferase 2">
    <location>
        <begin position="1"/>
        <end position="280"/>
    </location>
</feature>
<feature type="domain" description="PABS" evidence="1">
    <location>
        <begin position="2"/>
        <end position="237"/>
    </location>
</feature>
<feature type="active site" description="Proton acceptor" evidence="1">
    <location>
        <position position="157"/>
    </location>
</feature>
<feature type="binding site" evidence="1">
    <location>
        <position position="33"/>
    </location>
    <ligand>
        <name>S-methyl-5'-thioadenosine</name>
        <dbReference type="ChEBI" id="CHEBI:17509"/>
    </ligand>
</feature>
<feature type="binding site" evidence="1">
    <location>
        <position position="64"/>
    </location>
    <ligand>
        <name>spermidine</name>
        <dbReference type="ChEBI" id="CHEBI:57834"/>
    </ligand>
</feature>
<feature type="binding site" evidence="1">
    <location>
        <position position="88"/>
    </location>
    <ligand>
        <name>spermidine</name>
        <dbReference type="ChEBI" id="CHEBI:57834"/>
    </ligand>
</feature>
<feature type="binding site" evidence="1">
    <location>
        <position position="108"/>
    </location>
    <ligand>
        <name>S-methyl-5'-thioadenosine</name>
        <dbReference type="ChEBI" id="CHEBI:17509"/>
    </ligand>
</feature>
<feature type="binding site" evidence="1">
    <location>
        <begin position="139"/>
        <end position="140"/>
    </location>
    <ligand>
        <name>S-methyl-5'-thioadenosine</name>
        <dbReference type="ChEBI" id="CHEBI:17509"/>
    </ligand>
</feature>
<feature type="binding site" evidence="1">
    <location>
        <begin position="157"/>
        <end position="160"/>
    </location>
    <ligand>
        <name>spermidine</name>
        <dbReference type="ChEBI" id="CHEBI:57834"/>
    </ligand>
</feature>
<feature type="binding site" evidence="1">
    <location>
        <position position="164"/>
    </location>
    <ligand>
        <name>S-methyl-5'-thioadenosine</name>
        <dbReference type="ChEBI" id="CHEBI:17509"/>
    </ligand>
</feature>
<gene>
    <name evidence="1" type="primary">speE2</name>
    <name type="ordered locus">LB_311</name>
</gene>
<sequence>MELWLDEALELKNGRALKIKVKEFLHSRTTPFQKIDVFESVGFGRMFTLDGVVMMTEADEFAYHEMIVHVPMMSHPNPEKVLVIGGGDGGTVREVLKHPSVKEVHLCEIDKGVIDVCYEYFPEIANAMKDPRVKHAYEDGAKYVKDYQNYFDCIMVDSSDPVGPAEVLFKRPFYETMANCLKEGGICTTQGESFYYHGSIIRELFNFIPEIFKHCGYYYTVVPTYPSGIIGFTYCSKGPDPYTVVPDPQRVPQGLKYYSAEMHKAAFVLPQFAQKHIVRK</sequence>
<accession>Q8EXA3</accession>
<comment type="function">
    <text evidence="1">Catalyzes the irreversible transfer of a propylamine group from the amino donor S-adenosylmethioninamine (decarboxy-AdoMet) to putrescine (1,4-diaminobutane) to yield spermidine.</text>
</comment>
<comment type="catalytic activity">
    <reaction evidence="1">
        <text>S-adenosyl 3-(methylsulfanyl)propylamine + putrescine = S-methyl-5'-thioadenosine + spermidine + H(+)</text>
        <dbReference type="Rhea" id="RHEA:12721"/>
        <dbReference type="ChEBI" id="CHEBI:15378"/>
        <dbReference type="ChEBI" id="CHEBI:17509"/>
        <dbReference type="ChEBI" id="CHEBI:57443"/>
        <dbReference type="ChEBI" id="CHEBI:57834"/>
        <dbReference type="ChEBI" id="CHEBI:326268"/>
        <dbReference type="EC" id="2.5.1.16"/>
    </reaction>
</comment>
<comment type="pathway">
    <text evidence="1">Amine and polyamine biosynthesis; spermidine biosynthesis; spermidine from putrescine: step 1/1.</text>
</comment>
<comment type="subunit">
    <text evidence="1">Homodimer or homotetramer.</text>
</comment>
<comment type="subcellular location">
    <subcellularLocation>
        <location evidence="1">Cytoplasm</location>
    </subcellularLocation>
</comment>
<comment type="similarity">
    <text evidence="1">Belongs to the spermidine/spermine synthase family.</text>
</comment>
<reference key="1">
    <citation type="journal article" date="2003" name="Nature">
        <title>Unique physiological and pathogenic features of Leptospira interrogans revealed by whole-genome sequencing.</title>
        <authorList>
            <person name="Ren S.-X."/>
            <person name="Fu G."/>
            <person name="Jiang X.-G."/>
            <person name="Zeng R."/>
            <person name="Miao Y.-G."/>
            <person name="Xu H."/>
            <person name="Zhang Y.-X."/>
            <person name="Xiong H."/>
            <person name="Lu G."/>
            <person name="Lu L.-F."/>
            <person name="Jiang H.-Q."/>
            <person name="Jia J."/>
            <person name="Tu Y.-F."/>
            <person name="Jiang J.-X."/>
            <person name="Gu W.-Y."/>
            <person name="Zhang Y.-Q."/>
            <person name="Cai Z."/>
            <person name="Sheng H.-H."/>
            <person name="Yin H.-F."/>
            <person name="Zhang Y."/>
            <person name="Zhu G.-F."/>
            <person name="Wan M."/>
            <person name="Huang H.-L."/>
            <person name="Qian Z."/>
            <person name="Wang S.-Y."/>
            <person name="Ma W."/>
            <person name="Yao Z.-J."/>
            <person name="Shen Y."/>
            <person name="Qiang B.-Q."/>
            <person name="Xia Q.-C."/>
            <person name="Guo X.-K."/>
            <person name="Danchin A."/>
            <person name="Saint Girons I."/>
            <person name="Somerville R.L."/>
            <person name="Wen Y.-M."/>
            <person name="Shi M.-H."/>
            <person name="Chen Z."/>
            <person name="Xu J.-G."/>
            <person name="Zhao G.-P."/>
        </authorList>
    </citation>
    <scope>NUCLEOTIDE SEQUENCE [LARGE SCALE GENOMIC DNA]</scope>
    <source>
        <strain>56601</strain>
    </source>
</reference>